<sequence>MTRSLKKGPFVANHLLRKIENLNLRKEKKIIVTRSRASTIVPTMIGHTIAVYNGQEHLPIYITDRMIGHKLGEFVPTRIFRGHARSDKKSRR</sequence>
<name>RR19_ANGEV</name>
<keyword id="KW-0150">Chloroplast</keyword>
<keyword id="KW-0934">Plastid</keyword>
<keyword id="KW-0687">Ribonucleoprotein</keyword>
<keyword id="KW-0689">Ribosomal protein</keyword>
<keyword id="KW-0694">RNA-binding</keyword>
<keyword id="KW-0699">rRNA-binding</keyword>
<dbReference type="EMBL" id="DQ821119">
    <property type="protein sequence ID" value="ABG79641.1"/>
    <property type="molecule type" value="Genomic_DNA"/>
</dbReference>
<dbReference type="RefSeq" id="YP_001023742.1">
    <property type="nucleotide sequence ID" value="NC_008829.1"/>
</dbReference>
<dbReference type="SMR" id="A2T374"/>
<dbReference type="GeneID" id="4788136"/>
<dbReference type="GO" id="GO:0009507">
    <property type="term" value="C:chloroplast"/>
    <property type="evidence" value="ECO:0007669"/>
    <property type="project" value="UniProtKB-SubCell"/>
</dbReference>
<dbReference type="GO" id="GO:0005763">
    <property type="term" value="C:mitochondrial small ribosomal subunit"/>
    <property type="evidence" value="ECO:0007669"/>
    <property type="project" value="TreeGrafter"/>
</dbReference>
<dbReference type="GO" id="GO:0019843">
    <property type="term" value="F:rRNA binding"/>
    <property type="evidence" value="ECO:0007669"/>
    <property type="project" value="UniProtKB-UniRule"/>
</dbReference>
<dbReference type="GO" id="GO:0003735">
    <property type="term" value="F:structural constituent of ribosome"/>
    <property type="evidence" value="ECO:0007669"/>
    <property type="project" value="InterPro"/>
</dbReference>
<dbReference type="GO" id="GO:0000028">
    <property type="term" value="P:ribosomal small subunit assembly"/>
    <property type="evidence" value="ECO:0007669"/>
    <property type="project" value="TreeGrafter"/>
</dbReference>
<dbReference type="GO" id="GO:0006412">
    <property type="term" value="P:translation"/>
    <property type="evidence" value="ECO:0007669"/>
    <property type="project" value="UniProtKB-UniRule"/>
</dbReference>
<dbReference type="FunFam" id="3.30.860.10:FF:000001">
    <property type="entry name" value="30S ribosomal protein S19"/>
    <property type="match status" value="1"/>
</dbReference>
<dbReference type="Gene3D" id="3.30.860.10">
    <property type="entry name" value="30s Ribosomal Protein S19, Chain A"/>
    <property type="match status" value="1"/>
</dbReference>
<dbReference type="HAMAP" id="MF_00531">
    <property type="entry name" value="Ribosomal_uS19"/>
    <property type="match status" value="1"/>
</dbReference>
<dbReference type="InterPro" id="IPR002222">
    <property type="entry name" value="Ribosomal_uS19"/>
</dbReference>
<dbReference type="InterPro" id="IPR005732">
    <property type="entry name" value="Ribosomal_uS19_bac-type"/>
</dbReference>
<dbReference type="InterPro" id="IPR020934">
    <property type="entry name" value="Ribosomal_uS19_CS"/>
</dbReference>
<dbReference type="InterPro" id="IPR023575">
    <property type="entry name" value="Ribosomal_uS19_SF"/>
</dbReference>
<dbReference type="NCBIfam" id="TIGR01050">
    <property type="entry name" value="rpsS_bact"/>
    <property type="match status" value="1"/>
</dbReference>
<dbReference type="PANTHER" id="PTHR11880">
    <property type="entry name" value="RIBOSOMAL PROTEIN S19P FAMILY MEMBER"/>
    <property type="match status" value="1"/>
</dbReference>
<dbReference type="PANTHER" id="PTHR11880:SF8">
    <property type="entry name" value="SMALL RIBOSOMAL SUBUNIT PROTEIN US19M"/>
    <property type="match status" value="1"/>
</dbReference>
<dbReference type="Pfam" id="PF00203">
    <property type="entry name" value="Ribosomal_S19"/>
    <property type="match status" value="1"/>
</dbReference>
<dbReference type="PIRSF" id="PIRSF002144">
    <property type="entry name" value="Ribosomal_S19"/>
    <property type="match status" value="1"/>
</dbReference>
<dbReference type="PRINTS" id="PR00975">
    <property type="entry name" value="RIBOSOMALS19"/>
</dbReference>
<dbReference type="SUPFAM" id="SSF54570">
    <property type="entry name" value="Ribosomal protein S19"/>
    <property type="match status" value="1"/>
</dbReference>
<dbReference type="PROSITE" id="PS00323">
    <property type="entry name" value="RIBOSOMAL_S19"/>
    <property type="match status" value="1"/>
</dbReference>
<organism>
    <name type="scientific">Angiopteris evecta</name>
    <name type="common">Mule's foot fern</name>
    <name type="synonym">Polypodium evectum</name>
    <dbReference type="NCBI Taxonomy" id="13825"/>
    <lineage>
        <taxon>Eukaryota</taxon>
        <taxon>Viridiplantae</taxon>
        <taxon>Streptophyta</taxon>
        <taxon>Embryophyta</taxon>
        <taxon>Tracheophyta</taxon>
        <taxon>Polypodiopsida</taxon>
        <taxon>Marattiidae</taxon>
        <taxon>Marattiales</taxon>
        <taxon>Marattiaceae</taxon>
        <taxon>Angiopteris</taxon>
    </lineage>
</organism>
<accession>A2T374</accession>
<geneLocation type="chloroplast"/>
<protein>
    <recommendedName>
        <fullName evidence="1">Small ribosomal subunit protein uS19c</fullName>
    </recommendedName>
    <alternativeName>
        <fullName evidence="2">30S ribosomal protein S19, chloroplastic</fullName>
    </alternativeName>
</protein>
<proteinExistence type="inferred from homology"/>
<reference key="1">
    <citation type="journal article" date="2007" name="Am. Fern J.">
        <title>The complete plastid genome sequence of Angiopteris evecta (G. Forst.) Hoffm. (Marattiaceae).</title>
        <authorList>
            <person name="Roper J.M."/>
            <person name="Hansen S.K."/>
            <person name="Wolf P.G."/>
            <person name="Karol K.G."/>
            <person name="Mandoli D.F."/>
            <person name="Everett K.D.E."/>
            <person name="Kuehl J.V."/>
            <person name="Boore J.L."/>
        </authorList>
    </citation>
    <scope>NUCLEOTIDE SEQUENCE [LARGE SCALE GENOMIC DNA]</scope>
</reference>
<gene>
    <name evidence="1" type="primary">rps19</name>
</gene>
<feature type="chain" id="PRO_0000354333" description="Small ribosomal subunit protein uS19c">
    <location>
        <begin position="1"/>
        <end position="92"/>
    </location>
</feature>
<evidence type="ECO:0000255" key="1">
    <source>
        <dbReference type="HAMAP-Rule" id="MF_00531"/>
    </source>
</evidence>
<evidence type="ECO:0000305" key="2"/>
<comment type="function">
    <text evidence="1">Protein S19 forms a complex with S13 that binds strongly to the 16S ribosomal RNA.</text>
</comment>
<comment type="subcellular location">
    <subcellularLocation>
        <location>Plastid</location>
        <location>Chloroplast</location>
    </subcellularLocation>
</comment>
<comment type="similarity">
    <text evidence="1">Belongs to the universal ribosomal protein uS19 family.</text>
</comment>